<name>SUCC_KORVE</name>
<dbReference type="EC" id="6.2.1.5" evidence="1"/>
<dbReference type="EMBL" id="CP000360">
    <property type="protein sequence ID" value="ABF42875.1"/>
    <property type="molecule type" value="Genomic_DNA"/>
</dbReference>
<dbReference type="RefSeq" id="WP_011524674.1">
    <property type="nucleotide sequence ID" value="NC_008009.1"/>
</dbReference>
<dbReference type="SMR" id="Q1IJS5"/>
<dbReference type="STRING" id="204669.Acid345_3875"/>
<dbReference type="EnsemblBacteria" id="ABF42875">
    <property type="protein sequence ID" value="ABF42875"/>
    <property type="gene ID" value="Acid345_3875"/>
</dbReference>
<dbReference type="KEGG" id="aba:Acid345_3875"/>
<dbReference type="eggNOG" id="COG0045">
    <property type="taxonomic scope" value="Bacteria"/>
</dbReference>
<dbReference type="HOGENOM" id="CLU_037430_0_2_0"/>
<dbReference type="OrthoDB" id="9802602at2"/>
<dbReference type="UniPathway" id="UPA00223">
    <property type="reaction ID" value="UER00999"/>
</dbReference>
<dbReference type="Proteomes" id="UP000002432">
    <property type="component" value="Chromosome"/>
</dbReference>
<dbReference type="GO" id="GO:0005829">
    <property type="term" value="C:cytosol"/>
    <property type="evidence" value="ECO:0007669"/>
    <property type="project" value="TreeGrafter"/>
</dbReference>
<dbReference type="GO" id="GO:0042709">
    <property type="term" value="C:succinate-CoA ligase complex"/>
    <property type="evidence" value="ECO:0007669"/>
    <property type="project" value="TreeGrafter"/>
</dbReference>
<dbReference type="GO" id="GO:0005524">
    <property type="term" value="F:ATP binding"/>
    <property type="evidence" value="ECO:0007669"/>
    <property type="project" value="UniProtKB-UniRule"/>
</dbReference>
<dbReference type="GO" id="GO:0000287">
    <property type="term" value="F:magnesium ion binding"/>
    <property type="evidence" value="ECO:0007669"/>
    <property type="project" value="UniProtKB-UniRule"/>
</dbReference>
<dbReference type="GO" id="GO:0004775">
    <property type="term" value="F:succinate-CoA ligase (ADP-forming) activity"/>
    <property type="evidence" value="ECO:0007669"/>
    <property type="project" value="UniProtKB-UniRule"/>
</dbReference>
<dbReference type="GO" id="GO:0004776">
    <property type="term" value="F:succinate-CoA ligase (GDP-forming) activity"/>
    <property type="evidence" value="ECO:0007669"/>
    <property type="project" value="RHEA"/>
</dbReference>
<dbReference type="GO" id="GO:0006104">
    <property type="term" value="P:succinyl-CoA metabolic process"/>
    <property type="evidence" value="ECO:0007669"/>
    <property type="project" value="TreeGrafter"/>
</dbReference>
<dbReference type="GO" id="GO:0006099">
    <property type="term" value="P:tricarboxylic acid cycle"/>
    <property type="evidence" value="ECO:0007669"/>
    <property type="project" value="UniProtKB-UniRule"/>
</dbReference>
<dbReference type="FunFam" id="3.30.1490.20:FF:000002">
    <property type="entry name" value="Succinate--CoA ligase [ADP-forming] subunit beta"/>
    <property type="match status" value="1"/>
</dbReference>
<dbReference type="FunFam" id="3.30.470.20:FF:000002">
    <property type="entry name" value="Succinate--CoA ligase [ADP-forming] subunit beta"/>
    <property type="match status" value="1"/>
</dbReference>
<dbReference type="FunFam" id="3.40.50.261:FF:000001">
    <property type="entry name" value="Succinate--CoA ligase [ADP-forming] subunit beta"/>
    <property type="match status" value="1"/>
</dbReference>
<dbReference type="Gene3D" id="3.30.1490.20">
    <property type="entry name" value="ATP-grasp fold, A domain"/>
    <property type="match status" value="1"/>
</dbReference>
<dbReference type="Gene3D" id="3.30.470.20">
    <property type="entry name" value="ATP-grasp fold, B domain"/>
    <property type="match status" value="1"/>
</dbReference>
<dbReference type="Gene3D" id="3.40.50.261">
    <property type="entry name" value="Succinyl-CoA synthetase domains"/>
    <property type="match status" value="1"/>
</dbReference>
<dbReference type="HAMAP" id="MF_00558">
    <property type="entry name" value="Succ_CoA_beta"/>
    <property type="match status" value="1"/>
</dbReference>
<dbReference type="InterPro" id="IPR011761">
    <property type="entry name" value="ATP-grasp"/>
</dbReference>
<dbReference type="InterPro" id="IPR013650">
    <property type="entry name" value="ATP-grasp_succ-CoA_synth-type"/>
</dbReference>
<dbReference type="InterPro" id="IPR013815">
    <property type="entry name" value="ATP_grasp_subdomain_1"/>
</dbReference>
<dbReference type="InterPro" id="IPR017866">
    <property type="entry name" value="Succ-CoA_synthase_bsu_CS"/>
</dbReference>
<dbReference type="InterPro" id="IPR005811">
    <property type="entry name" value="SUCC_ACL_C"/>
</dbReference>
<dbReference type="InterPro" id="IPR005809">
    <property type="entry name" value="Succ_CoA_ligase-like_bsu"/>
</dbReference>
<dbReference type="InterPro" id="IPR016102">
    <property type="entry name" value="Succinyl-CoA_synth-like"/>
</dbReference>
<dbReference type="NCBIfam" id="NF001913">
    <property type="entry name" value="PRK00696.1"/>
    <property type="match status" value="1"/>
</dbReference>
<dbReference type="NCBIfam" id="TIGR01016">
    <property type="entry name" value="sucCoAbeta"/>
    <property type="match status" value="1"/>
</dbReference>
<dbReference type="PANTHER" id="PTHR11815:SF10">
    <property type="entry name" value="SUCCINATE--COA LIGASE [GDP-FORMING] SUBUNIT BETA, MITOCHONDRIAL"/>
    <property type="match status" value="1"/>
</dbReference>
<dbReference type="PANTHER" id="PTHR11815">
    <property type="entry name" value="SUCCINYL-COA SYNTHETASE BETA CHAIN"/>
    <property type="match status" value="1"/>
</dbReference>
<dbReference type="Pfam" id="PF08442">
    <property type="entry name" value="ATP-grasp_2"/>
    <property type="match status" value="1"/>
</dbReference>
<dbReference type="Pfam" id="PF00549">
    <property type="entry name" value="Ligase_CoA"/>
    <property type="match status" value="1"/>
</dbReference>
<dbReference type="PIRSF" id="PIRSF001554">
    <property type="entry name" value="SucCS_beta"/>
    <property type="match status" value="1"/>
</dbReference>
<dbReference type="SUPFAM" id="SSF56059">
    <property type="entry name" value="Glutathione synthetase ATP-binding domain-like"/>
    <property type="match status" value="1"/>
</dbReference>
<dbReference type="SUPFAM" id="SSF52210">
    <property type="entry name" value="Succinyl-CoA synthetase domains"/>
    <property type="match status" value="1"/>
</dbReference>
<dbReference type="PROSITE" id="PS50975">
    <property type="entry name" value="ATP_GRASP"/>
    <property type="match status" value="1"/>
</dbReference>
<dbReference type="PROSITE" id="PS01217">
    <property type="entry name" value="SUCCINYL_COA_LIG_3"/>
    <property type="match status" value="1"/>
</dbReference>
<comment type="function">
    <text evidence="1">Succinyl-CoA synthetase functions in the citric acid cycle (TCA), coupling the hydrolysis of succinyl-CoA to the synthesis of either ATP or GTP and thus represents the only step of substrate-level phosphorylation in the TCA. The beta subunit provides nucleotide specificity of the enzyme and binds the substrate succinate, while the binding sites for coenzyme A and phosphate are found in the alpha subunit.</text>
</comment>
<comment type="catalytic activity">
    <reaction evidence="1">
        <text>succinate + ATP + CoA = succinyl-CoA + ADP + phosphate</text>
        <dbReference type="Rhea" id="RHEA:17661"/>
        <dbReference type="ChEBI" id="CHEBI:30031"/>
        <dbReference type="ChEBI" id="CHEBI:30616"/>
        <dbReference type="ChEBI" id="CHEBI:43474"/>
        <dbReference type="ChEBI" id="CHEBI:57287"/>
        <dbReference type="ChEBI" id="CHEBI:57292"/>
        <dbReference type="ChEBI" id="CHEBI:456216"/>
        <dbReference type="EC" id="6.2.1.5"/>
    </reaction>
    <physiologicalReaction direction="right-to-left" evidence="1">
        <dbReference type="Rhea" id="RHEA:17663"/>
    </physiologicalReaction>
</comment>
<comment type="catalytic activity">
    <reaction evidence="1">
        <text>GTP + succinate + CoA = succinyl-CoA + GDP + phosphate</text>
        <dbReference type="Rhea" id="RHEA:22120"/>
        <dbReference type="ChEBI" id="CHEBI:30031"/>
        <dbReference type="ChEBI" id="CHEBI:37565"/>
        <dbReference type="ChEBI" id="CHEBI:43474"/>
        <dbReference type="ChEBI" id="CHEBI:57287"/>
        <dbReference type="ChEBI" id="CHEBI:57292"/>
        <dbReference type="ChEBI" id="CHEBI:58189"/>
    </reaction>
    <physiologicalReaction direction="right-to-left" evidence="1">
        <dbReference type="Rhea" id="RHEA:22122"/>
    </physiologicalReaction>
</comment>
<comment type="cofactor">
    <cofactor evidence="1">
        <name>Mg(2+)</name>
        <dbReference type="ChEBI" id="CHEBI:18420"/>
    </cofactor>
    <text evidence="1">Binds 1 Mg(2+) ion per subunit.</text>
</comment>
<comment type="pathway">
    <text evidence="1">Carbohydrate metabolism; tricarboxylic acid cycle; succinate from succinyl-CoA (ligase route): step 1/1.</text>
</comment>
<comment type="subunit">
    <text evidence="1">Heterotetramer of two alpha and two beta subunits.</text>
</comment>
<comment type="similarity">
    <text evidence="1">Belongs to the succinate/malate CoA ligase beta subunit family.</text>
</comment>
<gene>
    <name evidence="1" type="primary">sucC</name>
    <name type="ordered locus">Acid345_3875</name>
</gene>
<protein>
    <recommendedName>
        <fullName evidence="1">Succinate--CoA ligase [ADP-forming] subunit beta</fullName>
        <ecNumber evidence="1">6.2.1.5</ecNumber>
    </recommendedName>
    <alternativeName>
        <fullName evidence="1">Succinyl-CoA synthetase subunit beta</fullName>
        <shortName evidence="1">SCS-beta</shortName>
    </alternativeName>
</protein>
<keyword id="KW-0067">ATP-binding</keyword>
<keyword id="KW-0436">Ligase</keyword>
<keyword id="KW-0460">Magnesium</keyword>
<keyword id="KW-0479">Metal-binding</keyword>
<keyword id="KW-0547">Nucleotide-binding</keyword>
<keyword id="KW-1185">Reference proteome</keyword>
<keyword id="KW-0816">Tricarboxylic acid cycle</keyword>
<sequence length="392" mass="42278">MKIHEYQGKAILRKYGVAVPRGEMVTTREEAERVANDLMHDGAKGVVVKAQIHAGGRGKGGGVKIAKSVDEAGQLAGKILGMTLITHQTGPEGKKVQRLLIEETLPIERELYLSIVLDRSNGKPVFMASAAGGMEIEEVAAKDPNAIIKEWIEPGYGLGAFQARKIAFKLGLKPELIGQAVKFMQALYKTYDETDASLVEINPFITTSDNRLFALDAKFNFDDNGLFRHPDLKDLRDVTEEDPLEVEASKYGLNYIKLDGTVGCMVNGAGLAMATMDIIQYAGGMPANFLDVGGGANAEQVTHAFEILLSDKNVKAVLINIFGGILRVDTLATGVVQAATQTKIQLPIVLRLEGTNVEQGREILQKSGLNFIVAETMKDAAEKVVAAAKGVK</sequence>
<proteinExistence type="inferred from homology"/>
<evidence type="ECO:0000255" key="1">
    <source>
        <dbReference type="HAMAP-Rule" id="MF_00558"/>
    </source>
</evidence>
<reference key="1">
    <citation type="journal article" date="2009" name="Appl. Environ. Microbiol.">
        <title>Three genomes from the phylum Acidobacteria provide insight into the lifestyles of these microorganisms in soils.</title>
        <authorList>
            <person name="Ward N.L."/>
            <person name="Challacombe J.F."/>
            <person name="Janssen P.H."/>
            <person name="Henrissat B."/>
            <person name="Coutinho P.M."/>
            <person name="Wu M."/>
            <person name="Xie G."/>
            <person name="Haft D.H."/>
            <person name="Sait M."/>
            <person name="Badger J."/>
            <person name="Barabote R.D."/>
            <person name="Bradley B."/>
            <person name="Brettin T.S."/>
            <person name="Brinkac L.M."/>
            <person name="Bruce D."/>
            <person name="Creasy T."/>
            <person name="Daugherty S.C."/>
            <person name="Davidsen T.M."/>
            <person name="DeBoy R.T."/>
            <person name="Detter J.C."/>
            <person name="Dodson R.J."/>
            <person name="Durkin A.S."/>
            <person name="Ganapathy A."/>
            <person name="Gwinn-Giglio M."/>
            <person name="Han C.S."/>
            <person name="Khouri H."/>
            <person name="Kiss H."/>
            <person name="Kothari S.P."/>
            <person name="Madupu R."/>
            <person name="Nelson K.E."/>
            <person name="Nelson W.C."/>
            <person name="Paulsen I."/>
            <person name="Penn K."/>
            <person name="Ren Q."/>
            <person name="Rosovitz M.J."/>
            <person name="Selengut J.D."/>
            <person name="Shrivastava S."/>
            <person name="Sullivan S.A."/>
            <person name="Tapia R."/>
            <person name="Thompson L.S."/>
            <person name="Watkins K.L."/>
            <person name="Yang Q."/>
            <person name="Yu C."/>
            <person name="Zafar N."/>
            <person name="Zhou L."/>
            <person name="Kuske C.R."/>
        </authorList>
    </citation>
    <scope>NUCLEOTIDE SEQUENCE [LARGE SCALE GENOMIC DNA]</scope>
    <source>
        <strain>Ellin345</strain>
    </source>
</reference>
<feature type="chain" id="PRO_1000081986" description="Succinate--CoA ligase [ADP-forming] subunit beta">
    <location>
        <begin position="1"/>
        <end position="392"/>
    </location>
</feature>
<feature type="domain" description="ATP-grasp" evidence="1">
    <location>
        <begin position="9"/>
        <end position="247"/>
    </location>
</feature>
<feature type="binding site" evidence="1">
    <location>
        <position position="49"/>
    </location>
    <ligand>
        <name>ATP</name>
        <dbReference type="ChEBI" id="CHEBI:30616"/>
    </ligand>
</feature>
<feature type="binding site" evidence="1">
    <location>
        <begin position="56"/>
        <end position="58"/>
    </location>
    <ligand>
        <name>ATP</name>
        <dbReference type="ChEBI" id="CHEBI:30616"/>
    </ligand>
</feature>
<feature type="binding site" evidence="1">
    <location>
        <position position="102"/>
    </location>
    <ligand>
        <name>ATP</name>
        <dbReference type="ChEBI" id="CHEBI:30616"/>
    </ligand>
</feature>
<feature type="binding site" evidence="1">
    <location>
        <position position="105"/>
    </location>
    <ligand>
        <name>ATP</name>
        <dbReference type="ChEBI" id="CHEBI:30616"/>
    </ligand>
</feature>
<feature type="binding site" evidence="1">
    <location>
        <position position="110"/>
    </location>
    <ligand>
        <name>ATP</name>
        <dbReference type="ChEBI" id="CHEBI:30616"/>
    </ligand>
</feature>
<feature type="binding site" evidence="1">
    <location>
        <position position="202"/>
    </location>
    <ligand>
        <name>Mg(2+)</name>
        <dbReference type="ChEBI" id="CHEBI:18420"/>
    </ligand>
</feature>
<feature type="binding site" evidence="1">
    <location>
        <position position="216"/>
    </location>
    <ligand>
        <name>Mg(2+)</name>
        <dbReference type="ChEBI" id="CHEBI:18420"/>
    </ligand>
</feature>
<feature type="binding site" evidence="1">
    <location>
        <position position="267"/>
    </location>
    <ligand>
        <name>substrate</name>
        <note>ligand shared with subunit alpha</note>
    </ligand>
</feature>
<feature type="binding site" evidence="1">
    <location>
        <begin position="324"/>
        <end position="326"/>
    </location>
    <ligand>
        <name>substrate</name>
        <note>ligand shared with subunit alpha</note>
    </ligand>
</feature>
<accession>Q1IJS5</accession>
<organism>
    <name type="scientific">Koribacter versatilis (strain Ellin345)</name>
    <dbReference type="NCBI Taxonomy" id="204669"/>
    <lineage>
        <taxon>Bacteria</taxon>
        <taxon>Pseudomonadati</taxon>
        <taxon>Acidobacteriota</taxon>
        <taxon>Terriglobia</taxon>
        <taxon>Terriglobales</taxon>
        <taxon>Candidatus Korobacteraceae</taxon>
        <taxon>Candidatus Korobacter</taxon>
    </lineage>
</organism>